<comment type="induction">
    <text>By wounding and fungal elicitor.</text>
</comment>
<comment type="similarity">
    <text evidence="1">Belongs to the BetVI family.</text>
</comment>
<feature type="chain" id="PRO_0000154161" description="Pathogenesis-related protein STH-2">
    <location>
        <begin position="1"/>
        <end position="155"/>
    </location>
</feature>
<gene>
    <name type="primary">STH-2</name>
</gene>
<protein>
    <recommendedName>
        <fullName>Pathogenesis-related protein STH-2</fullName>
    </recommendedName>
</protein>
<accession>P17642</accession>
<evidence type="ECO:0000305" key="1"/>
<sequence length="155" mass="17295">MGVTSYTHETTTPIAPTRLFKALVVDSDNLIPKLMPQVKNIEAEGDGSIKKMNFVEGSPIKYLKHKIHVVDDKNLVTKYSMIEGDVLGDKLESISYDLKFEAHGNGGCVCKSITEYHTKGDYVLKDEEHNEGQKQGMELFKIVEAYLLANPSVYA</sequence>
<dbReference type="EMBL" id="M25155">
    <property type="protein sequence ID" value="AAA03019.1"/>
    <property type="molecule type" value="mRNA"/>
</dbReference>
<dbReference type="EMBL" id="M29041">
    <property type="protein sequence ID" value="AAA02828.1"/>
    <property type="molecule type" value="Unassigned_DNA"/>
</dbReference>
<dbReference type="PIR" id="S35161">
    <property type="entry name" value="S35161"/>
</dbReference>
<dbReference type="RefSeq" id="NP_001275014.1">
    <property type="nucleotide sequence ID" value="NM_001288085.1"/>
</dbReference>
<dbReference type="SMR" id="P17642"/>
<dbReference type="STRING" id="4113.P17642"/>
<dbReference type="PaxDb" id="4113-PGSC0003DMT400003936"/>
<dbReference type="GeneID" id="102577752"/>
<dbReference type="KEGG" id="sot:102577752"/>
<dbReference type="eggNOG" id="ENOG502RXTQ">
    <property type="taxonomic scope" value="Eukaryota"/>
</dbReference>
<dbReference type="InParanoid" id="P17642"/>
<dbReference type="Proteomes" id="UP000011115">
    <property type="component" value="Unassembled WGS sequence"/>
</dbReference>
<dbReference type="ExpressionAtlas" id="P17642">
    <property type="expression patterns" value="baseline"/>
</dbReference>
<dbReference type="GO" id="GO:0005737">
    <property type="term" value="C:cytoplasm"/>
    <property type="evidence" value="ECO:0000318"/>
    <property type="project" value="GO_Central"/>
</dbReference>
<dbReference type="GO" id="GO:0005634">
    <property type="term" value="C:nucleus"/>
    <property type="evidence" value="ECO:0000318"/>
    <property type="project" value="GO_Central"/>
</dbReference>
<dbReference type="GO" id="GO:0010427">
    <property type="term" value="F:abscisic acid binding"/>
    <property type="evidence" value="ECO:0000318"/>
    <property type="project" value="GO_Central"/>
</dbReference>
<dbReference type="GO" id="GO:0004864">
    <property type="term" value="F:protein phosphatase inhibitor activity"/>
    <property type="evidence" value="ECO:0000318"/>
    <property type="project" value="GO_Central"/>
</dbReference>
<dbReference type="GO" id="GO:0038023">
    <property type="term" value="F:signaling receptor activity"/>
    <property type="evidence" value="ECO:0000318"/>
    <property type="project" value="GO_Central"/>
</dbReference>
<dbReference type="GO" id="GO:0009738">
    <property type="term" value="P:abscisic acid-activated signaling pathway"/>
    <property type="evidence" value="ECO:0000318"/>
    <property type="project" value="GO_Central"/>
</dbReference>
<dbReference type="GO" id="GO:0006952">
    <property type="term" value="P:defense response"/>
    <property type="evidence" value="ECO:0007669"/>
    <property type="project" value="UniProtKB-KW"/>
</dbReference>
<dbReference type="CDD" id="cd07816">
    <property type="entry name" value="Bet_v1-like"/>
    <property type="match status" value="1"/>
</dbReference>
<dbReference type="FunFam" id="3.30.530.20:FF:000007">
    <property type="entry name" value="Major pollen allergen Bet v 1-A"/>
    <property type="match status" value="1"/>
</dbReference>
<dbReference type="Gene3D" id="3.30.530.20">
    <property type="match status" value="1"/>
</dbReference>
<dbReference type="InterPro" id="IPR000916">
    <property type="entry name" value="Bet_v_I/MLP"/>
</dbReference>
<dbReference type="InterPro" id="IPR024949">
    <property type="entry name" value="Bet_v_I_allergen"/>
</dbReference>
<dbReference type="InterPro" id="IPR050279">
    <property type="entry name" value="Plant_def-hormone_signal"/>
</dbReference>
<dbReference type="InterPro" id="IPR023393">
    <property type="entry name" value="START-like_dom_sf"/>
</dbReference>
<dbReference type="PANTHER" id="PTHR31213">
    <property type="entry name" value="OS08G0374000 PROTEIN-RELATED"/>
    <property type="match status" value="1"/>
</dbReference>
<dbReference type="PANTHER" id="PTHR31213:SF149">
    <property type="entry name" value="PATHOGENESIS-RELATED PROTEIN STH-2"/>
    <property type="match status" value="1"/>
</dbReference>
<dbReference type="Pfam" id="PF00407">
    <property type="entry name" value="Bet_v_1"/>
    <property type="match status" value="1"/>
</dbReference>
<dbReference type="PRINTS" id="PR00634">
    <property type="entry name" value="BETALLERGEN"/>
</dbReference>
<dbReference type="SUPFAM" id="SSF55961">
    <property type="entry name" value="Bet v1-like"/>
    <property type="match status" value="1"/>
</dbReference>
<dbReference type="PROSITE" id="PS00451">
    <property type="entry name" value="PATHOGENESIS_BETVI"/>
    <property type="match status" value="1"/>
</dbReference>
<proteinExistence type="evidence at transcript level"/>
<keyword id="KW-0568">Pathogenesis-related protein</keyword>
<keyword id="KW-0611">Plant defense</keyword>
<keyword id="KW-1185">Reference proteome</keyword>
<name>PRS2_SOLTU</name>
<reference key="1">
    <citation type="journal article" date="1989" name="Mol. Plant Microbe Interact.">
        <title>Cloning, expression, and sequence conservation of pathogenesis-related gene transcripts of potato.</title>
        <authorList>
            <person name="Matton D.P."/>
            <person name="Brisson N."/>
        </authorList>
    </citation>
    <scope>NUCLEOTIDE SEQUENCE [MRNA]</scope>
</reference>
<reference key="2">
    <citation type="journal article" date="1993" name="Plant Mol. Biol.">
        <title>Identification of cis-acting elements involved in the regulation of the pathogenesis-related gene STH-2 in potato.</title>
        <authorList>
            <person name="Matton D.P."/>
            <person name="Prescott G."/>
            <person name="Bertrand C."/>
            <person name="Camirand A."/>
            <person name="Brisson N."/>
        </authorList>
    </citation>
    <scope>NUCLEOTIDE SEQUENCE</scope>
</reference>
<organism>
    <name type="scientific">Solanum tuberosum</name>
    <name type="common">Potato</name>
    <dbReference type="NCBI Taxonomy" id="4113"/>
    <lineage>
        <taxon>Eukaryota</taxon>
        <taxon>Viridiplantae</taxon>
        <taxon>Streptophyta</taxon>
        <taxon>Embryophyta</taxon>
        <taxon>Tracheophyta</taxon>
        <taxon>Spermatophyta</taxon>
        <taxon>Magnoliopsida</taxon>
        <taxon>eudicotyledons</taxon>
        <taxon>Gunneridae</taxon>
        <taxon>Pentapetalae</taxon>
        <taxon>asterids</taxon>
        <taxon>lamiids</taxon>
        <taxon>Solanales</taxon>
        <taxon>Solanaceae</taxon>
        <taxon>Solanoideae</taxon>
        <taxon>Solaneae</taxon>
        <taxon>Solanum</taxon>
    </lineage>
</organism>